<proteinExistence type="inferred from homology"/>
<reference key="1">
    <citation type="journal article" date="2003" name="Proc. Natl. Acad. Sci. U.S.A.">
        <title>Complete genome sequence of the Q-fever pathogen, Coxiella burnetii.</title>
        <authorList>
            <person name="Seshadri R."/>
            <person name="Paulsen I.T."/>
            <person name="Eisen J.A."/>
            <person name="Read T.D."/>
            <person name="Nelson K.E."/>
            <person name="Nelson W.C."/>
            <person name="Ward N.L."/>
            <person name="Tettelin H."/>
            <person name="Davidsen T.M."/>
            <person name="Beanan M.J."/>
            <person name="DeBoy R.T."/>
            <person name="Daugherty S.C."/>
            <person name="Brinkac L.M."/>
            <person name="Madupu R."/>
            <person name="Dodson R.J."/>
            <person name="Khouri H.M."/>
            <person name="Lee K.H."/>
            <person name="Carty H.A."/>
            <person name="Scanlan D."/>
            <person name="Heinzen R.A."/>
            <person name="Thompson H.A."/>
            <person name="Samuel J.E."/>
            <person name="Fraser C.M."/>
            <person name="Heidelberg J.F."/>
        </authorList>
    </citation>
    <scope>NUCLEOTIDE SEQUENCE [LARGE SCALE GENOMIC DNA]</scope>
    <source>
        <strain>RSA 493 / Nine Mile phase I</strain>
    </source>
</reference>
<comment type="function">
    <text evidence="1">Catalyzes the transfer of an acyl group from acyl-phosphate (acyl-PO(4)) to glycerol-3-phosphate (G3P) to form lysophosphatidic acid (LPA). This enzyme utilizes acyl-phosphate as fatty acyl donor, but not acyl-CoA or acyl-ACP.</text>
</comment>
<comment type="catalytic activity">
    <reaction evidence="1">
        <text>an acyl phosphate + sn-glycerol 3-phosphate = a 1-acyl-sn-glycero-3-phosphate + phosphate</text>
        <dbReference type="Rhea" id="RHEA:34075"/>
        <dbReference type="ChEBI" id="CHEBI:43474"/>
        <dbReference type="ChEBI" id="CHEBI:57597"/>
        <dbReference type="ChEBI" id="CHEBI:57970"/>
        <dbReference type="ChEBI" id="CHEBI:59918"/>
        <dbReference type="EC" id="2.3.1.275"/>
    </reaction>
</comment>
<comment type="pathway">
    <text evidence="1">Lipid metabolism; phospholipid metabolism.</text>
</comment>
<comment type="subunit">
    <text evidence="1">Probably interacts with PlsX.</text>
</comment>
<comment type="subcellular location">
    <subcellularLocation>
        <location evidence="1">Cell inner membrane</location>
        <topology evidence="1">Multi-pass membrane protein</topology>
    </subcellularLocation>
</comment>
<comment type="similarity">
    <text evidence="1">Belongs to the PlsY family.</text>
</comment>
<sequence length="193" mass="20861">MAFIISIIIAYLLGSLSFAVIVAKLMKLPDPRTTGSGNAGATNMLRVGGRQAAFYVLLGDAAKGLIAVLIARFLNVQGVSLAFVGLVAVLGHLFPVYFKFRGGKGVATMMGVLLGLSFWIGLFVIATWVIVVSIFRYSSVAALVSAVAAPIYTIIAGRTDYLFPVLIIAILIIWKHWENFQRLRKGTEDKVKL</sequence>
<keyword id="KW-0997">Cell inner membrane</keyword>
<keyword id="KW-1003">Cell membrane</keyword>
<keyword id="KW-0444">Lipid biosynthesis</keyword>
<keyword id="KW-0443">Lipid metabolism</keyword>
<keyword id="KW-0472">Membrane</keyword>
<keyword id="KW-0594">Phospholipid biosynthesis</keyword>
<keyword id="KW-1208">Phospholipid metabolism</keyword>
<keyword id="KW-1185">Reference proteome</keyword>
<keyword id="KW-0808">Transferase</keyword>
<keyword id="KW-0812">Transmembrane</keyword>
<keyword id="KW-1133">Transmembrane helix</keyword>
<evidence type="ECO:0000255" key="1">
    <source>
        <dbReference type="HAMAP-Rule" id="MF_01043"/>
    </source>
</evidence>
<protein>
    <recommendedName>
        <fullName evidence="1">Glycerol-3-phosphate acyltransferase</fullName>
    </recommendedName>
    <alternativeName>
        <fullName evidence="1">Acyl-PO4 G3P acyltransferase</fullName>
    </alternativeName>
    <alternativeName>
        <fullName evidence="1">Acyl-phosphate--glycerol-3-phosphate acyltransferase</fullName>
    </alternativeName>
    <alternativeName>
        <fullName evidence="1">G3P acyltransferase</fullName>
        <shortName evidence="1">GPAT</shortName>
        <ecNumber evidence="1">2.3.1.275</ecNumber>
    </alternativeName>
    <alternativeName>
        <fullName evidence="1">Lysophosphatidic acid synthase</fullName>
        <shortName evidence="1">LPA synthase</shortName>
    </alternativeName>
</protein>
<feature type="chain" id="PRO_0000188348" description="Glycerol-3-phosphate acyltransferase">
    <location>
        <begin position="1"/>
        <end position="193"/>
    </location>
</feature>
<feature type="transmembrane region" description="Helical" evidence="1">
    <location>
        <begin position="2"/>
        <end position="22"/>
    </location>
</feature>
<feature type="transmembrane region" description="Helical" evidence="1">
    <location>
        <begin position="51"/>
        <end position="71"/>
    </location>
</feature>
<feature type="transmembrane region" description="Helical" evidence="1">
    <location>
        <begin position="78"/>
        <end position="98"/>
    </location>
</feature>
<feature type="transmembrane region" description="Helical" evidence="1">
    <location>
        <begin position="112"/>
        <end position="132"/>
    </location>
</feature>
<feature type="transmembrane region" description="Helical" evidence="1">
    <location>
        <begin position="154"/>
        <end position="174"/>
    </location>
</feature>
<gene>
    <name evidence="1" type="primary">plsY</name>
    <name type="ordered locus">CBU_1239</name>
</gene>
<organism>
    <name type="scientific">Coxiella burnetii (strain RSA 493 / Nine Mile phase I)</name>
    <dbReference type="NCBI Taxonomy" id="227377"/>
    <lineage>
        <taxon>Bacteria</taxon>
        <taxon>Pseudomonadati</taxon>
        <taxon>Pseudomonadota</taxon>
        <taxon>Gammaproteobacteria</taxon>
        <taxon>Legionellales</taxon>
        <taxon>Coxiellaceae</taxon>
        <taxon>Coxiella</taxon>
    </lineage>
</organism>
<name>PLSY_COXBU</name>
<accession>Q83C89</accession>
<dbReference type="EC" id="2.3.1.275" evidence="1"/>
<dbReference type="EMBL" id="AE016828">
    <property type="protein sequence ID" value="AAO90748.1"/>
    <property type="molecule type" value="Genomic_DNA"/>
</dbReference>
<dbReference type="RefSeq" id="NP_820234.1">
    <property type="nucleotide sequence ID" value="NC_002971.3"/>
</dbReference>
<dbReference type="RefSeq" id="WP_005770791.1">
    <property type="nucleotide sequence ID" value="NZ_CDBG01000001.1"/>
</dbReference>
<dbReference type="SMR" id="Q83C89"/>
<dbReference type="STRING" id="227377.CBU_1239"/>
<dbReference type="EnsemblBacteria" id="AAO90748">
    <property type="protein sequence ID" value="AAO90748"/>
    <property type="gene ID" value="CBU_1239"/>
</dbReference>
<dbReference type="GeneID" id="1209144"/>
<dbReference type="KEGG" id="cbu:CBU_1239"/>
<dbReference type="PATRIC" id="fig|227377.7.peg.1230"/>
<dbReference type="eggNOG" id="COG0344">
    <property type="taxonomic scope" value="Bacteria"/>
</dbReference>
<dbReference type="HOGENOM" id="CLU_081254_0_0_6"/>
<dbReference type="OrthoDB" id="9777124at2"/>
<dbReference type="UniPathway" id="UPA00085"/>
<dbReference type="Proteomes" id="UP000002671">
    <property type="component" value="Chromosome"/>
</dbReference>
<dbReference type="GO" id="GO:0005886">
    <property type="term" value="C:plasma membrane"/>
    <property type="evidence" value="ECO:0000318"/>
    <property type="project" value="GO_Central"/>
</dbReference>
<dbReference type="GO" id="GO:0043772">
    <property type="term" value="F:acyl-phosphate glycerol-3-phosphate acyltransferase activity"/>
    <property type="evidence" value="ECO:0007669"/>
    <property type="project" value="UniProtKB-UniRule"/>
</dbReference>
<dbReference type="GO" id="GO:0008654">
    <property type="term" value="P:phospholipid biosynthetic process"/>
    <property type="evidence" value="ECO:0007669"/>
    <property type="project" value="UniProtKB-UniRule"/>
</dbReference>
<dbReference type="HAMAP" id="MF_01043">
    <property type="entry name" value="PlsY"/>
    <property type="match status" value="1"/>
</dbReference>
<dbReference type="InterPro" id="IPR003811">
    <property type="entry name" value="G3P_acylTferase_PlsY"/>
</dbReference>
<dbReference type="NCBIfam" id="TIGR00023">
    <property type="entry name" value="glycerol-3-phosphate 1-O-acyltransferase PlsY"/>
    <property type="match status" value="1"/>
</dbReference>
<dbReference type="PANTHER" id="PTHR30309:SF0">
    <property type="entry name" value="GLYCEROL-3-PHOSPHATE ACYLTRANSFERASE-RELATED"/>
    <property type="match status" value="1"/>
</dbReference>
<dbReference type="PANTHER" id="PTHR30309">
    <property type="entry name" value="INNER MEMBRANE PROTEIN YGIH"/>
    <property type="match status" value="1"/>
</dbReference>
<dbReference type="Pfam" id="PF02660">
    <property type="entry name" value="G3P_acyltransf"/>
    <property type="match status" value="1"/>
</dbReference>
<dbReference type="SMART" id="SM01207">
    <property type="entry name" value="G3P_acyltransf"/>
    <property type="match status" value="1"/>
</dbReference>